<feature type="signal peptide" evidence="5">
    <location>
        <begin position="1"/>
        <end position="21"/>
    </location>
</feature>
<feature type="chain" id="PRO_0000002793" description="Wheatwin-1">
    <location>
        <begin position="22"/>
        <end position="146"/>
    </location>
</feature>
<feature type="domain" description="Barwin" evidence="2">
    <location>
        <begin position="22"/>
        <end position="146"/>
    </location>
</feature>
<feature type="modified residue" description="Pyrrolidone carboxylic acid" evidence="5">
    <location>
        <position position="22"/>
    </location>
</feature>
<feature type="disulfide bond" evidence="1">
    <location>
        <begin position="52"/>
        <end position="84"/>
    </location>
</feature>
<feature type="disulfide bond" evidence="1">
    <location>
        <begin position="73"/>
        <end position="107"/>
    </location>
</feature>
<feature type="disulfide bond" evidence="1">
    <location>
        <begin position="87"/>
        <end position="144"/>
    </location>
</feature>
<feature type="sequence variant" evidence="5">
    <original>N</original>
    <variation>D</variation>
    <location>
        <position position="109"/>
    </location>
</feature>
<feature type="mutagenesis site" description="Loss of antifungal activity. Reduces ribonuclease activity 60%." evidence="4">
    <original>H</original>
    <variation>G</variation>
    <location>
        <position position="32"/>
    </location>
</feature>
<feature type="mutagenesis site" description="Loss of antifungal activity. Reduces ribonuclease activity 62%. Reduces ribonuclease activity 92%; when associated with L-134." evidence="4">
    <original>H</original>
    <variation>L</variation>
    <location>
        <position position="32"/>
    </location>
</feature>
<feature type="mutagenesis site" description="Loss of antifungal activity. Reduces ribonuclease activity 92%; when associated with L-32." evidence="4">
    <original>H</original>
    <variation>L</variation>
    <location>
        <position position="134"/>
    </location>
</feature>
<accession>O64392</accession>
<evidence type="ECO:0000250" key="1"/>
<evidence type="ECO:0000255" key="2">
    <source>
        <dbReference type="PROSITE-ProRule" id="PRU00527"/>
    </source>
</evidence>
<evidence type="ECO:0000269" key="3">
    <source>
    </source>
</evidence>
<evidence type="ECO:0000269" key="4">
    <source>
    </source>
</evidence>
<evidence type="ECO:0000269" key="5">
    <source>
    </source>
</evidence>
<evidence type="ECO:0000269" key="6">
    <source ref="5"/>
</evidence>
<keyword id="KW-0929">Antimicrobial</keyword>
<keyword id="KW-0903">Direct protein sequencing</keyword>
<keyword id="KW-1015">Disulfide bond</keyword>
<keyword id="KW-0295">Fungicide</keyword>
<keyword id="KW-0378">Hydrolase</keyword>
<keyword id="KW-0381">Hypersensitive response</keyword>
<keyword id="KW-0540">Nuclease</keyword>
<keyword id="KW-0568">Pathogenesis-related protein</keyword>
<keyword id="KW-0611">Plant defense</keyword>
<keyword id="KW-0873">Pyrrolidone carboxylic acid</keyword>
<keyword id="KW-1185">Reference proteome</keyword>
<keyword id="KW-0732">Signal</keyword>
<comment type="function">
    <text evidence="3 4">Shows antifungal activity towards B.cinerea and towards the wheat-specific pathogenic fungi F.culmorum and F.graminearum (groups 1 and 2). Has ribonuclease activity.</text>
</comment>
<comment type="activity regulation">
    <text evidence="4">Inhibited by 5'-ADP.</text>
</comment>
<comment type="subunit">
    <text>Monomer.</text>
</comment>
<comment type="induction">
    <text evidence="6">Up-regulated by fungal infection, salicylic acid (SA), benzo (1,2,3) thiodiazole-7-carbothioic acid S-methyl ester (BTH), methyl jasmonate (MeJA) and wounding.</text>
</comment>
<name>WHW1_WHEAT</name>
<sequence length="146" mass="15635">MAARPMLVVALLCAAAAAATAQQATNVRATYHYYRPAQNNWDLGAPAVSAYCATWDASKPLSWRSKYGWTAFCGPAGAHGQASCGKCLQVTNPATGAQITARIVDQCANGGLDLDWDTVFTKIDTNGIGYQQGHLNVNYQFVDCRD</sequence>
<protein>
    <recommendedName>
        <fullName>Wheatwin-1</fullName>
    </recommendedName>
    <alternativeName>
        <fullName>Pathogenesis-related protein 4a</fullName>
    </alternativeName>
    <alternativeName>
        <fullName>Protein 0.14</fullName>
    </alternativeName>
    <alternativeName>
        <fullName>RNase</fullName>
        <ecNumber>3.1.-.-</ecNumber>
    </alternativeName>
</protein>
<organism>
    <name type="scientific">Triticum aestivum</name>
    <name type="common">Wheat</name>
    <dbReference type="NCBI Taxonomy" id="4565"/>
    <lineage>
        <taxon>Eukaryota</taxon>
        <taxon>Viridiplantae</taxon>
        <taxon>Streptophyta</taxon>
        <taxon>Embryophyta</taxon>
        <taxon>Tracheophyta</taxon>
        <taxon>Spermatophyta</taxon>
        <taxon>Magnoliopsida</taxon>
        <taxon>Liliopsida</taxon>
        <taxon>Poales</taxon>
        <taxon>Poaceae</taxon>
        <taxon>BOP clade</taxon>
        <taxon>Pooideae</taxon>
        <taxon>Triticodae</taxon>
        <taxon>Triticeae</taxon>
        <taxon>Triticinae</taxon>
        <taxon>Triticum</taxon>
    </lineage>
</organism>
<proteinExistence type="evidence at protein level"/>
<dbReference type="EC" id="3.1.-.-"/>
<dbReference type="EMBL" id="AJ006098">
    <property type="protein sequence ID" value="CAA06856.1"/>
    <property type="molecule type" value="Genomic_DNA"/>
</dbReference>
<dbReference type="PIR" id="A53882">
    <property type="entry name" value="A53882"/>
</dbReference>
<dbReference type="PIR" id="T06485">
    <property type="entry name" value="T06485"/>
</dbReference>
<dbReference type="SMR" id="O64392"/>
<dbReference type="STRING" id="4565.O64392"/>
<dbReference type="EnsemblPlants" id="TraesCAD_scaffold_019321_01G000100.1">
    <property type="protein sequence ID" value="TraesCAD_scaffold_019321_01G000100.1"/>
    <property type="gene ID" value="TraesCAD_scaffold_019321_01G000100"/>
</dbReference>
<dbReference type="EnsemblPlants" id="TraesCLE_scaffold_022433_01G000100.1">
    <property type="protein sequence ID" value="TraesCLE_scaffold_022433_01G000100.1"/>
    <property type="gene ID" value="TraesCLE_scaffold_022433_01G000100"/>
</dbReference>
<dbReference type="EnsemblPlants" id="TraesCS3A02G517100.1">
    <property type="protein sequence ID" value="TraesCS3A02G517100.1.cds1"/>
    <property type="gene ID" value="TraesCS3A02G517100"/>
</dbReference>
<dbReference type="EnsemblPlants" id="TraesCS3A03G1217600.1">
    <property type="protein sequence ID" value="TraesCS3A03G1217600.1.CDS1"/>
    <property type="gene ID" value="TraesCS3A03G1217600"/>
</dbReference>
<dbReference type="EnsemblPlants" id="TraesJAG3A03G01530100.1">
    <property type="protein sequence ID" value="TraesJAG3A03G01530100.1.CDS1"/>
    <property type="gene ID" value="TraesJAG3A03G01530100"/>
</dbReference>
<dbReference type="EnsemblPlants" id="TraesJAG3A03G01530100.2">
    <property type="protein sequence ID" value="TraesJAG3A03G01530100.2.CDS1"/>
    <property type="gene ID" value="TraesJAG3A03G01530100"/>
</dbReference>
<dbReference type="EnsemblPlants" id="TraesJUL3A03G01534490.1">
    <property type="protein sequence ID" value="TraesJUL3A03G01534490.1.CDS1"/>
    <property type="gene ID" value="TraesJUL3A03G01534490"/>
</dbReference>
<dbReference type="EnsemblPlants" id="TraesKAR3A01G0464270.1">
    <property type="protein sequence ID" value="cds.TraesKAR3A01G0464270.1"/>
    <property type="gene ID" value="TraesKAR3A01G0464270"/>
</dbReference>
<dbReference type="EnsemblPlants" id="TraesLAC3A03G01465240.1">
    <property type="protein sequence ID" value="TraesLAC3A03G01465240.1.CDS1"/>
    <property type="gene ID" value="TraesLAC3A03G01465240"/>
</dbReference>
<dbReference type="EnsemblPlants" id="TraesMAC3A03G01519880.2">
    <property type="protein sequence ID" value="TraesMAC3A03G01519880.2.CDS1"/>
    <property type="gene ID" value="TraesMAC3A03G01519880"/>
</dbReference>
<dbReference type="EnsemblPlants" id="TraesNOR3A03G01543070.1">
    <property type="protein sequence ID" value="TraesNOR3A03G01543070.1.CDS1"/>
    <property type="gene ID" value="TraesNOR3A03G01543070"/>
</dbReference>
<dbReference type="EnsemblPlants" id="TraesNOR3A03G01543070.2">
    <property type="protein sequence ID" value="TraesNOR3A03G01543070.2.CDS1"/>
    <property type="gene ID" value="TraesNOR3A03G01543070"/>
</dbReference>
<dbReference type="EnsemblPlants" id="TraesPARA_EIv1.0_0888510.1">
    <property type="protein sequence ID" value="TraesPARA_EIv1.0_0888510.1.CDS1"/>
    <property type="gene ID" value="TraesPARA_EIv1.0_0888510"/>
</dbReference>
<dbReference type="EnsemblPlants" id="TraesROB_scaffold_067620_01G000300.1">
    <property type="protein sequence ID" value="TraesROB_scaffold_067620_01G000300.1"/>
    <property type="gene ID" value="TraesROB_scaffold_067620_01G000300"/>
</dbReference>
<dbReference type="EnsemblPlants" id="TraesSTA3A03G01513310.1">
    <property type="protein sequence ID" value="TraesSTA3A03G01513310.1.CDS1"/>
    <property type="gene ID" value="TraesSTA3A03G01513310"/>
</dbReference>
<dbReference type="EnsemblPlants" id="TraesSYM3A03G01545590.1">
    <property type="protein sequence ID" value="TraesSYM3A03G01545590.1.CDS1"/>
    <property type="gene ID" value="TraesSYM3A03G01545590"/>
</dbReference>
<dbReference type="EnsemblPlants" id="TraesSYM3A03G01545590.2">
    <property type="protein sequence ID" value="TraesSYM3A03G01545590.2.CDS1"/>
    <property type="gene ID" value="TraesSYM3A03G01545590"/>
</dbReference>
<dbReference type="EnsemblPlants" id="TraesWEE_scaffold_149922_01G000200.1">
    <property type="protein sequence ID" value="TraesWEE_scaffold_149922_01G000200.1"/>
    <property type="gene ID" value="TraesWEE_scaffold_149922_01G000200"/>
</dbReference>
<dbReference type="Gramene" id="TraesCAD_scaffold_019321_01G000100.1">
    <property type="protein sequence ID" value="TraesCAD_scaffold_019321_01G000100.1"/>
    <property type="gene ID" value="TraesCAD_scaffold_019321_01G000100"/>
</dbReference>
<dbReference type="Gramene" id="TraesCLE_scaffold_022433_01G000100.1">
    <property type="protein sequence ID" value="TraesCLE_scaffold_022433_01G000100.1"/>
    <property type="gene ID" value="TraesCLE_scaffold_022433_01G000100"/>
</dbReference>
<dbReference type="Gramene" id="TraesCS3A02G517100.1">
    <property type="protein sequence ID" value="TraesCS3A02G517100.1.cds1"/>
    <property type="gene ID" value="TraesCS3A02G517100"/>
</dbReference>
<dbReference type="Gramene" id="TraesCS3A03G1217600.1">
    <property type="protein sequence ID" value="TraesCS3A03G1217600.1.CDS1"/>
    <property type="gene ID" value="TraesCS3A03G1217600"/>
</dbReference>
<dbReference type="Gramene" id="TraesJAG3A03G01530100.1">
    <property type="protein sequence ID" value="TraesJAG3A03G01530100.1.CDS1"/>
    <property type="gene ID" value="TraesJAG3A03G01530100"/>
</dbReference>
<dbReference type="Gramene" id="TraesJAG3A03G01530100.2">
    <property type="protein sequence ID" value="TraesJAG3A03G01530100.2.CDS1"/>
    <property type="gene ID" value="TraesJAG3A03G01530100"/>
</dbReference>
<dbReference type="Gramene" id="TraesJUL3A03G01534490.1">
    <property type="protein sequence ID" value="TraesJUL3A03G01534490.1.CDS1"/>
    <property type="gene ID" value="TraesJUL3A03G01534490"/>
</dbReference>
<dbReference type="Gramene" id="TraesKAR3A01G0464270.1">
    <property type="protein sequence ID" value="cds.TraesKAR3A01G0464270.1"/>
    <property type="gene ID" value="TraesKAR3A01G0464270"/>
</dbReference>
<dbReference type="Gramene" id="TraesLAC3A03G01465240.1">
    <property type="protein sequence ID" value="TraesLAC3A03G01465240.1.CDS1"/>
    <property type="gene ID" value="TraesLAC3A03G01465240"/>
</dbReference>
<dbReference type="Gramene" id="TraesMAC3A03G01519880.2">
    <property type="protein sequence ID" value="TraesMAC3A03G01519880.2.CDS1"/>
    <property type="gene ID" value="TraesMAC3A03G01519880"/>
</dbReference>
<dbReference type="Gramene" id="TraesNOR3A03G01543070.1">
    <property type="protein sequence ID" value="TraesNOR3A03G01543070.1.CDS1"/>
    <property type="gene ID" value="TraesNOR3A03G01543070"/>
</dbReference>
<dbReference type="Gramene" id="TraesNOR3A03G01543070.2">
    <property type="protein sequence ID" value="TraesNOR3A03G01543070.2.CDS1"/>
    <property type="gene ID" value="TraesNOR3A03G01543070"/>
</dbReference>
<dbReference type="Gramene" id="TraesPARA_EIv1.0_0888510.1">
    <property type="protein sequence ID" value="TraesPARA_EIv1.0_0888510.1.CDS1"/>
    <property type="gene ID" value="TraesPARA_EIv1.0_0888510"/>
</dbReference>
<dbReference type="Gramene" id="TraesROB_scaffold_067620_01G000300.1">
    <property type="protein sequence ID" value="TraesROB_scaffold_067620_01G000300.1"/>
    <property type="gene ID" value="TraesROB_scaffold_067620_01G000300"/>
</dbReference>
<dbReference type="Gramene" id="TraesSTA3A03G01513310.1">
    <property type="protein sequence ID" value="TraesSTA3A03G01513310.1.CDS1"/>
    <property type="gene ID" value="TraesSTA3A03G01513310"/>
</dbReference>
<dbReference type="Gramene" id="TraesSYM3A03G01545590.1">
    <property type="protein sequence ID" value="TraesSYM3A03G01545590.1.CDS1"/>
    <property type="gene ID" value="TraesSYM3A03G01545590"/>
</dbReference>
<dbReference type="Gramene" id="TraesSYM3A03G01545590.2">
    <property type="protein sequence ID" value="TraesSYM3A03G01545590.2.CDS1"/>
    <property type="gene ID" value="TraesSYM3A03G01545590"/>
</dbReference>
<dbReference type="Gramene" id="TraesWEE_scaffold_149922_01G000200.1">
    <property type="protein sequence ID" value="TraesWEE_scaffold_149922_01G000200.1"/>
    <property type="gene ID" value="TraesWEE_scaffold_149922_01G000200"/>
</dbReference>
<dbReference type="OMA" id="KMERFCI"/>
<dbReference type="OrthoDB" id="5985073at2759"/>
<dbReference type="Proteomes" id="UP000019116">
    <property type="component" value="Chromosome 3A"/>
</dbReference>
<dbReference type="ExpressionAtlas" id="O64392">
    <property type="expression patterns" value="baseline and differential"/>
</dbReference>
<dbReference type="GO" id="GO:0004540">
    <property type="term" value="F:RNA nuclease activity"/>
    <property type="evidence" value="ECO:0007669"/>
    <property type="project" value="InterPro"/>
</dbReference>
<dbReference type="GO" id="GO:0042742">
    <property type="term" value="P:defense response to bacterium"/>
    <property type="evidence" value="ECO:0007669"/>
    <property type="project" value="InterPro"/>
</dbReference>
<dbReference type="GO" id="GO:0050832">
    <property type="term" value="P:defense response to fungus"/>
    <property type="evidence" value="ECO:0007669"/>
    <property type="project" value="UniProtKB-KW"/>
</dbReference>
<dbReference type="GO" id="GO:0031640">
    <property type="term" value="P:killing of cells of another organism"/>
    <property type="evidence" value="ECO:0007669"/>
    <property type="project" value="UniProtKB-KW"/>
</dbReference>
<dbReference type="GO" id="GO:0009626">
    <property type="term" value="P:plant-type hypersensitive response"/>
    <property type="evidence" value="ECO:0007669"/>
    <property type="project" value="UniProtKB-KW"/>
</dbReference>
<dbReference type="FunFam" id="2.40.40.10:FF:000007">
    <property type="entry name" value="Papaya barwin-like protein"/>
    <property type="match status" value="1"/>
</dbReference>
<dbReference type="Gene3D" id="2.40.40.10">
    <property type="entry name" value="RlpA-like domain"/>
    <property type="match status" value="1"/>
</dbReference>
<dbReference type="InterPro" id="IPR018226">
    <property type="entry name" value="Barwin_CS"/>
</dbReference>
<dbReference type="InterPro" id="IPR001153">
    <property type="entry name" value="Barwin_dom"/>
</dbReference>
<dbReference type="InterPro" id="IPR044301">
    <property type="entry name" value="PR4"/>
</dbReference>
<dbReference type="InterPro" id="IPR036908">
    <property type="entry name" value="RlpA-like_sf"/>
</dbReference>
<dbReference type="PANTHER" id="PTHR46351:SF18">
    <property type="entry name" value="WHEATWIN-2"/>
    <property type="match status" value="1"/>
</dbReference>
<dbReference type="PANTHER" id="PTHR46351">
    <property type="entry name" value="WOUND-INDUCED PROTEIN WIN2"/>
    <property type="match status" value="1"/>
</dbReference>
<dbReference type="Pfam" id="PF00967">
    <property type="entry name" value="Barwin"/>
    <property type="match status" value="1"/>
</dbReference>
<dbReference type="PRINTS" id="PR00602">
    <property type="entry name" value="BARWIN"/>
</dbReference>
<dbReference type="SUPFAM" id="SSF50685">
    <property type="entry name" value="Barwin-like endoglucanases"/>
    <property type="match status" value="1"/>
</dbReference>
<dbReference type="PROSITE" id="PS00771">
    <property type="entry name" value="BARWIN_1"/>
    <property type="match status" value="1"/>
</dbReference>
<dbReference type="PROSITE" id="PS00772">
    <property type="entry name" value="BARWIN_2"/>
    <property type="match status" value="1"/>
</dbReference>
<dbReference type="PROSITE" id="PS51174">
    <property type="entry name" value="BARWIN_3"/>
    <property type="match status" value="1"/>
</dbReference>
<reference key="1">
    <citation type="journal article" date="1999" name="DNA Seq.">
        <title>Isolation and characterisation of wheat cDNA clones encoding PR4 proteins.</title>
        <authorList>
            <person name="Caruso C."/>
            <person name="Bertini L."/>
            <person name="Tucci M."/>
            <person name="Caporale C."/>
            <person name="Leonardi L."/>
            <person name="Saccardo F."/>
            <person name="Bressan R.A."/>
            <person name="Veronese P."/>
            <person name="Buonocore V."/>
        </authorList>
    </citation>
    <scope>NUCLEOTIDE SEQUENCE [GENOMIC DNA]</scope>
    <scope>SEQUENCE REVISION TO 66</scope>
    <source>
        <strain>cv. San Pastore</strain>
        <tissue>Endosperm</tissue>
    </source>
</reference>
<reference key="2">
    <citation type="journal article" date="1993" name="J. Protein Chem.">
        <title>The amino acid sequence of a protein from wheat kernel closely related to proteins involved in the mechanisms of plant defence.</title>
        <authorList>
            <person name="Caruso C."/>
            <person name="Caporale C."/>
            <person name="Poerio E."/>
            <person name="Facchiano A."/>
            <person name="Buonocore V."/>
        </authorList>
    </citation>
    <scope>PROTEIN SEQUENCE OF 22-146</scope>
    <scope>PYROGLUTAMATE FORMATION AT GLN-22</scope>
    <scope>VARIANT ASP-109</scope>
    <source>
        <strain>cv. San Pastore</strain>
        <tissue>Kernel</tissue>
    </source>
</reference>
<reference key="3">
    <citation type="journal article" date="1999" name="Proteins">
        <title>Probing the modelled structure of wheatwin1 by controlled proteolysis and sequence analysis of unfractionated digestion mixtures.</title>
        <authorList>
            <person name="Caporale C."/>
            <person name="Caruso C."/>
            <person name="Facchiano A."/>
            <person name="Nobile M."/>
            <person name="Leonardi L."/>
            <person name="Bertini L."/>
            <person name="Colonna G."/>
            <person name="Buonocore V."/>
        </authorList>
    </citation>
    <scope>PARTIAL PROTEIN SEQUENCE</scope>
    <scope>3D-STRUCTURE MODELING</scope>
    <source>
        <strain>cv. San Pastore</strain>
    </source>
</reference>
<reference key="4">
    <citation type="journal article" date="1996" name="J. Protein Chem.">
        <title>Structural and antifungal properties of a pathogenesis-related protein from wheat kernel.</title>
        <authorList>
            <person name="Caruso C."/>
            <person name="Caporale C."/>
            <person name="Chilosi G."/>
            <person name="Vacca F."/>
            <person name="Bertini L."/>
            <person name="Magro P."/>
            <person name="Poerio E."/>
            <person name="Buonocore V."/>
        </authorList>
    </citation>
    <scope>ANTIFUNGAL ACTIVITY</scope>
</reference>
<reference key="5">
    <citation type="journal article" date="2003" name="Plant Sci.">
        <title>Pathogen-responsive wheat PR4 genes are induced by activators of systemic acquired resistance and wounding.</title>
        <authorList>
            <person name="Bertini L."/>
            <person name="Leonardi L."/>
            <person name="Caporale C."/>
            <person name="Tucci M."/>
            <person name="Cascone N."/>
            <person name="Di Berardino I."/>
            <person name="Buonocore V."/>
            <person name="Caruso C."/>
        </authorList>
    </citation>
    <scope>INDUCTION</scope>
</reference>
<reference key="6">
    <citation type="journal article" date="2004" name="FEBS Lett.">
        <title>Wheat pathogenesis-related proteins of class 4 have ribonuclease activity.</title>
        <authorList>
            <person name="Caporale C."/>
            <person name="Di Berardino I."/>
            <person name="Leonardi L."/>
            <person name="Bertini L."/>
            <person name="Cascone A."/>
            <person name="Buonocore V."/>
            <person name="Caruso C."/>
        </authorList>
    </citation>
    <scope>FUNCTION</scope>
</reference>
<reference key="7">
    <citation type="journal article" date="2009" name="FEBS Lett.">
        <title>Structural basis of the antifungal activity of wheat PR4 proteins.</title>
        <authorList>
            <person name="Bertini L."/>
            <person name="Caporale C."/>
            <person name="Testa M."/>
            <person name="Proietti S."/>
            <person name="Caruso C."/>
        </authorList>
    </citation>
    <scope>FUNCTION</scope>
    <scope>MUTAGENESIS OF HIS-32 AND HIS-134</scope>
    <scope>ACTIVITY REGULATION</scope>
</reference>
<gene>
    <name type="primary">PR4A</name>
</gene>